<evidence type="ECO:0000255" key="1">
    <source>
        <dbReference type="HAMAP-Rule" id="MF_00939"/>
    </source>
</evidence>
<evidence type="ECO:0000256" key="2">
    <source>
        <dbReference type="SAM" id="MobiDB-lite"/>
    </source>
</evidence>
<evidence type="ECO:0000305" key="3"/>
<gene>
    <name evidence="1" type="primary">parE</name>
    <name type="synonym">grlB</name>
    <name type="ordered locus">SAR1366</name>
</gene>
<keyword id="KW-0067">ATP-binding</keyword>
<keyword id="KW-0238">DNA-binding</keyword>
<keyword id="KW-0413">Isomerase</keyword>
<keyword id="KW-0460">Magnesium</keyword>
<keyword id="KW-0479">Metal-binding</keyword>
<keyword id="KW-0547">Nucleotide-binding</keyword>
<keyword id="KW-0799">Topoisomerase</keyword>
<proteinExistence type="inferred from homology"/>
<feature type="chain" id="PRO_0000145437" description="DNA topoisomerase 4 subunit B">
    <location>
        <begin position="1"/>
        <end position="663"/>
    </location>
</feature>
<feature type="domain" description="Toprim" evidence="1">
    <location>
        <begin position="424"/>
        <end position="538"/>
    </location>
</feature>
<feature type="region of interest" description="Disordered" evidence="2">
    <location>
        <begin position="386"/>
        <end position="418"/>
    </location>
</feature>
<feature type="compositionally biased region" description="Basic and acidic residues" evidence="2">
    <location>
        <begin position="387"/>
        <end position="398"/>
    </location>
</feature>
<feature type="binding site" evidence="1">
    <location>
        <position position="7"/>
    </location>
    <ligand>
        <name>ATP</name>
        <dbReference type="ChEBI" id="CHEBI:30616"/>
    </ligand>
</feature>
<feature type="binding site" evidence="1">
    <location>
        <position position="47"/>
    </location>
    <ligand>
        <name>ATP</name>
        <dbReference type="ChEBI" id="CHEBI:30616"/>
    </ligand>
</feature>
<feature type="binding site" evidence="1">
    <location>
        <position position="74"/>
    </location>
    <ligand>
        <name>ATP</name>
        <dbReference type="ChEBI" id="CHEBI:30616"/>
    </ligand>
</feature>
<feature type="binding site" evidence="1">
    <location>
        <begin position="114"/>
        <end position="120"/>
    </location>
    <ligand>
        <name>ATP</name>
        <dbReference type="ChEBI" id="CHEBI:30616"/>
    </ligand>
</feature>
<feature type="binding site" evidence="1">
    <location>
        <position position="341"/>
    </location>
    <ligand>
        <name>ATP</name>
        <dbReference type="ChEBI" id="CHEBI:30616"/>
    </ligand>
</feature>
<feature type="binding site" evidence="1">
    <location>
        <position position="430"/>
    </location>
    <ligand>
        <name>Mg(2+)</name>
        <dbReference type="ChEBI" id="CHEBI:18420"/>
        <label>1</label>
        <note>catalytic</note>
    </ligand>
</feature>
<feature type="binding site" evidence="1">
    <location>
        <position position="503"/>
    </location>
    <ligand>
        <name>Mg(2+)</name>
        <dbReference type="ChEBI" id="CHEBI:18420"/>
        <label>1</label>
        <note>catalytic</note>
    </ligand>
</feature>
<feature type="binding site" evidence="1">
    <location>
        <position position="503"/>
    </location>
    <ligand>
        <name>Mg(2+)</name>
        <dbReference type="ChEBI" id="CHEBI:18420"/>
        <label>2</label>
    </ligand>
</feature>
<feature type="binding site" evidence="1">
    <location>
        <position position="505"/>
    </location>
    <ligand>
        <name>Mg(2+)</name>
        <dbReference type="ChEBI" id="CHEBI:18420"/>
        <label>2</label>
    </ligand>
</feature>
<feature type="site" description="Interaction with DNA" evidence="1">
    <location>
        <position position="455"/>
    </location>
</feature>
<feature type="site" description="Interaction with DNA" evidence="1">
    <location>
        <position position="458"/>
    </location>
</feature>
<feature type="site" description="Interaction with DNA" evidence="1">
    <location>
        <position position="510"/>
    </location>
</feature>
<feature type="site" description="Interaction with DNA" evidence="1">
    <location>
        <position position="626"/>
    </location>
</feature>
<dbReference type="EC" id="5.6.2.2" evidence="1"/>
<dbReference type="EMBL" id="BX571856">
    <property type="protein sequence ID" value="CAG40364.1"/>
    <property type="status" value="ALT_INIT"/>
    <property type="molecule type" value="Genomic_DNA"/>
</dbReference>
<dbReference type="RefSeq" id="WP_041202518.1">
    <property type="nucleotide sequence ID" value="NC_002952.2"/>
</dbReference>
<dbReference type="SMR" id="Q6GH51"/>
<dbReference type="KEGG" id="sar:SAR1366"/>
<dbReference type="HOGENOM" id="CLU_006146_4_1_9"/>
<dbReference type="Proteomes" id="UP000000596">
    <property type="component" value="Chromosome"/>
</dbReference>
<dbReference type="GO" id="GO:0005694">
    <property type="term" value="C:chromosome"/>
    <property type="evidence" value="ECO:0007669"/>
    <property type="project" value="InterPro"/>
</dbReference>
<dbReference type="GO" id="GO:0005524">
    <property type="term" value="F:ATP binding"/>
    <property type="evidence" value="ECO:0007669"/>
    <property type="project" value="UniProtKB-UniRule"/>
</dbReference>
<dbReference type="GO" id="GO:0003677">
    <property type="term" value="F:DNA binding"/>
    <property type="evidence" value="ECO:0007669"/>
    <property type="project" value="UniProtKB-UniRule"/>
</dbReference>
<dbReference type="GO" id="GO:0034335">
    <property type="term" value="F:DNA negative supercoiling activity"/>
    <property type="evidence" value="ECO:0007669"/>
    <property type="project" value="UniProtKB-ARBA"/>
</dbReference>
<dbReference type="GO" id="GO:0046872">
    <property type="term" value="F:metal ion binding"/>
    <property type="evidence" value="ECO:0007669"/>
    <property type="project" value="UniProtKB-KW"/>
</dbReference>
<dbReference type="GO" id="GO:0007059">
    <property type="term" value="P:chromosome segregation"/>
    <property type="evidence" value="ECO:0007669"/>
    <property type="project" value="UniProtKB-UniRule"/>
</dbReference>
<dbReference type="GO" id="GO:0006265">
    <property type="term" value="P:DNA topological change"/>
    <property type="evidence" value="ECO:0007669"/>
    <property type="project" value="UniProtKB-UniRule"/>
</dbReference>
<dbReference type="CDD" id="cd16928">
    <property type="entry name" value="HATPase_GyrB-like"/>
    <property type="match status" value="1"/>
</dbReference>
<dbReference type="CDD" id="cd00822">
    <property type="entry name" value="TopoII_Trans_DNA_gyrase"/>
    <property type="match status" value="1"/>
</dbReference>
<dbReference type="FunFam" id="3.30.230.10:FF:000005">
    <property type="entry name" value="DNA gyrase subunit B"/>
    <property type="match status" value="1"/>
</dbReference>
<dbReference type="FunFam" id="3.30.565.10:FF:000002">
    <property type="entry name" value="DNA gyrase subunit B"/>
    <property type="match status" value="1"/>
</dbReference>
<dbReference type="FunFam" id="3.40.50.670:FF:000002">
    <property type="entry name" value="DNA gyrase subunit B"/>
    <property type="match status" value="1"/>
</dbReference>
<dbReference type="Gene3D" id="3.30.230.10">
    <property type="match status" value="1"/>
</dbReference>
<dbReference type="Gene3D" id="3.40.50.670">
    <property type="match status" value="1"/>
</dbReference>
<dbReference type="Gene3D" id="3.30.565.10">
    <property type="entry name" value="Histidine kinase-like ATPase, C-terminal domain"/>
    <property type="match status" value="1"/>
</dbReference>
<dbReference type="HAMAP" id="MF_00939">
    <property type="entry name" value="ParE_type2"/>
    <property type="match status" value="1"/>
</dbReference>
<dbReference type="InterPro" id="IPR002288">
    <property type="entry name" value="DNA_gyrase_B_C"/>
</dbReference>
<dbReference type="InterPro" id="IPR036890">
    <property type="entry name" value="HATPase_C_sf"/>
</dbReference>
<dbReference type="InterPro" id="IPR005740">
    <property type="entry name" value="ParE_type2"/>
</dbReference>
<dbReference type="InterPro" id="IPR020568">
    <property type="entry name" value="Ribosomal_Su5_D2-typ_SF"/>
</dbReference>
<dbReference type="InterPro" id="IPR014721">
    <property type="entry name" value="Ribsml_uS5_D2-typ_fold_subgr"/>
</dbReference>
<dbReference type="InterPro" id="IPR001241">
    <property type="entry name" value="Topo_IIA"/>
</dbReference>
<dbReference type="InterPro" id="IPR013760">
    <property type="entry name" value="Topo_IIA-like_dom_sf"/>
</dbReference>
<dbReference type="InterPro" id="IPR000565">
    <property type="entry name" value="Topo_IIA_B"/>
</dbReference>
<dbReference type="InterPro" id="IPR013759">
    <property type="entry name" value="Topo_IIA_B_C"/>
</dbReference>
<dbReference type="InterPro" id="IPR013506">
    <property type="entry name" value="Topo_IIA_bsu_dom2"/>
</dbReference>
<dbReference type="InterPro" id="IPR018522">
    <property type="entry name" value="TopoIIA_CS"/>
</dbReference>
<dbReference type="InterPro" id="IPR006171">
    <property type="entry name" value="TOPRIM_dom"/>
</dbReference>
<dbReference type="NCBIfam" id="TIGR01058">
    <property type="entry name" value="parE_Gpos"/>
    <property type="match status" value="1"/>
</dbReference>
<dbReference type="NCBIfam" id="NF004189">
    <property type="entry name" value="PRK05644.1"/>
    <property type="match status" value="1"/>
</dbReference>
<dbReference type="PANTHER" id="PTHR45866">
    <property type="entry name" value="DNA GYRASE/TOPOISOMERASE SUBUNIT B"/>
    <property type="match status" value="1"/>
</dbReference>
<dbReference type="PANTHER" id="PTHR45866:SF12">
    <property type="entry name" value="DNA TOPOISOMERASE 4 SUBUNIT B"/>
    <property type="match status" value="1"/>
</dbReference>
<dbReference type="Pfam" id="PF00204">
    <property type="entry name" value="DNA_gyraseB"/>
    <property type="match status" value="1"/>
</dbReference>
<dbReference type="Pfam" id="PF00986">
    <property type="entry name" value="DNA_gyraseB_C"/>
    <property type="match status" value="1"/>
</dbReference>
<dbReference type="Pfam" id="PF02518">
    <property type="entry name" value="HATPase_c"/>
    <property type="match status" value="1"/>
</dbReference>
<dbReference type="Pfam" id="PF01751">
    <property type="entry name" value="Toprim"/>
    <property type="match status" value="1"/>
</dbReference>
<dbReference type="PRINTS" id="PR01159">
    <property type="entry name" value="DNAGYRASEB"/>
</dbReference>
<dbReference type="PRINTS" id="PR00418">
    <property type="entry name" value="TPI2FAMILY"/>
</dbReference>
<dbReference type="SMART" id="SM00387">
    <property type="entry name" value="HATPase_c"/>
    <property type="match status" value="1"/>
</dbReference>
<dbReference type="SMART" id="SM00433">
    <property type="entry name" value="TOP2c"/>
    <property type="match status" value="1"/>
</dbReference>
<dbReference type="SUPFAM" id="SSF55874">
    <property type="entry name" value="ATPase domain of HSP90 chaperone/DNA topoisomerase II/histidine kinase"/>
    <property type="match status" value="1"/>
</dbReference>
<dbReference type="SUPFAM" id="SSF54211">
    <property type="entry name" value="Ribosomal protein S5 domain 2-like"/>
    <property type="match status" value="1"/>
</dbReference>
<dbReference type="SUPFAM" id="SSF56719">
    <property type="entry name" value="Type II DNA topoisomerase"/>
    <property type="match status" value="1"/>
</dbReference>
<dbReference type="PROSITE" id="PS00177">
    <property type="entry name" value="TOPOISOMERASE_II"/>
    <property type="match status" value="1"/>
</dbReference>
<dbReference type="PROSITE" id="PS50880">
    <property type="entry name" value="TOPRIM"/>
    <property type="match status" value="1"/>
</dbReference>
<protein>
    <recommendedName>
        <fullName evidence="1">DNA topoisomerase 4 subunit B</fullName>
        <ecNumber evidence="1">5.6.2.2</ecNumber>
    </recommendedName>
    <alternativeName>
        <fullName evidence="1">Topoisomerase IV subunit B</fullName>
    </alternativeName>
</protein>
<reference key="1">
    <citation type="journal article" date="2004" name="Proc. Natl. Acad. Sci. U.S.A.">
        <title>Complete genomes of two clinical Staphylococcus aureus strains: evidence for the rapid evolution of virulence and drug resistance.</title>
        <authorList>
            <person name="Holden M.T.G."/>
            <person name="Feil E.J."/>
            <person name="Lindsay J.A."/>
            <person name="Peacock S.J."/>
            <person name="Day N.P.J."/>
            <person name="Enright M.C."/>
            <person name="Foster T.J."/>
            <person name="Moore C.E."/>
            <person name="Hurst L."/>
            <person name="Atkin R."/>
            <person name="Barron A."/>
            <person name="Bason N."/>
            <person name="Bentley S.D."/>
            <person name="Chillingworth C."/>
            <person name="Chillingworth T."/>
            <person name="Churcher C."/>
            <person name="Clark L."/>
            <person name="Corton C."/>
            <person name="Cronin A."/>
            <person name="Doggett J."/>
            <person name="Dowd L."/>
            <person name="Feltwell T."/>
            <person name="Hance Z."/>
            <person name="Harris B."/>
            <person name="Hauser H."/>
            <person name="Holroyd S."/>
            <person name="Jagels K."/>
            <person name="James K.D."/>
            <person name="Lennard N."/>
            <person name="Line A."/>
            <person name="Mayes R."/>
            <person name="Moule S."/>
            <person name="Mungall K."/>
            <person name="Ormond D."/>
            <person name="Quail M.A."/>
            <person name="Rabbinowitsch E."/>
            <person name="Rutherford K.M."/>
            <person name="Sanders M."/>
            <person name="Sharp S."/>
            <person name="Simmonds M."/>
            <person name="Stevens K."/>
            <person name="Whitehead S."/>
            <person name="Barrell B.G."/>
            <person name="Spratt B.G."/>
            <person name="Parkhill J."/>
        </authorList>
    </citation>
    <scope>NUCLEOTIDE SEQUENCE [LARGE SCALE GENOMIC DNA]</scope>
    <source>
        <strain>MRSA252</strain>
    </source>
</reference>
<sequence length="663" mass="74398">MNKQNNYSDDSIQVLEGLEAVRKRPGMYIGSTDKRGLHHLVYEIVDNSVDEVLNGYGNEIDVTINKDGSISIEDNGRGMPTGIHKSGKPTVEVIFTVLHAGGKFGQGGYKTSGGLHGVGASVVNALSEWLEVEIHRDGNIYHQSFKNGGSPSSGLVKKGKTKKTGTKVTFKPDDTIFKASTSFNFDVLSERLQESAFLLKNLKITLNDLRSGKERQEHYHYEEGIKEFVSYVNEGKEVLHDVATFSGEANGIEVDVAFQYNDQYSESILSFVNNVRTKDGGTHEVGFKTAMTRVFNDYARRINELKTKDKNLDGNDIREGLTAVVSVRIPEELLQFEGQTKSKLGTSEARSAVDSVVADKLPFYLEEKGQLSKSLVKKAIKAQQAREAARKAREDARSGKKNKRKDTLLSGKLTPAQSKNTDKNELYLVEGDSAGGSAKLGRDRKFQAILPLRGKVINTEKARLEDIFKNEEINTIIHTIGAGVGTDFKIEDSNYNRVIIMTDADTDGAHIQVLLLTFFFKYMKPLVQAGRVFIALPPLYKLEKGKGKTKRVEYAWTDEELNKLQKELGKGFTLQRYKGLGEMNPEQLWETTMNPETRTLIRVQVEDEVRSSKRVTTLMGDKVQPRREWIEKHFEFGMQEDQSILDNSEVQVLENDQFDEEEI</sequence>
<comment type="function">
    <text evidence="1">Topoisomerase IV is essential for chromosome segregation. It relaxes supercoiled DNA. Performs the decatenation events required during the replication of a circular DNA molecule.</text>
</comment>
<comment type="catalytic activity">
    <reaction evidence="1">
        <text>ATP-dependent breakage, passage and rejoining of double-stranded DNA.</text>
        <dbReference type="EC" id="5.6.2.2"/>
    </reaction>
</comment>
<comment type="cofactor">
    <cofactor evidence="1">
        <name>Mg(2+)</name>
        <dbReference type="ChEBI" id="CHEBI:18420"/>
    </cofactor>
    <cofactor evidence="1">
        <name>Mn(2+)</name>
        <dbReference type="ChEBI" id="CHEBI:29035"/>
    </cofactor>
    <cofactor evidence="1">
        <name>Ca(2+)</name>
        <dbReference type="ChEBI" id="CHEBI:29108"/>
    </cofactor>
    <text evidence="1">Binds two Mg(2+) per subunit. The magnesium ions form salt bridges with both the protein and the DNA. Can also accept other divalent metal cations, such as Mn(2+) or Ca(2+).</text>
</comment>
<comment type="subunit">
    <text evidence="1">Heterotetramer composed of ParC and ParE.</text>
</comment>
<comment type="similarity">
    <text evidence="1">Belongs to the type II topoisomerase family. ParE type 2 subfamily.</text>
</comment>
<comment type="sequence caution" evidence="3">
    <conflict type="erroneous initiation">
        <sequence resource="EMBL-CDS" id="CAG40364"/>
    </conflict>
</comment>
<name>PARE_STAAR</name>
<organism>
    <name type="scientific">Staphylococcus aureus (strain MRSA252)</name>
    <dbReference type="NCBI Taxonomy" id="282458"/>
    <lineage>
        <taxon>Bacteria</taxon>
        <taxon>Bacillati</taxon>
        <taxon>Bacillota</taxon>
        <taxon>Bacilli</taxon>
        <taxon>Bacillales</taxon>
        <taxon>Staphylococcaceae</taxon>
        <taxon>Staphylococcus</taxon>
    </lineage>
</organism>
<accession>Q6GH51</accession>